<reference key="1">
    <citation type="journal article" date="2006" name="Science">
        <title>A NAC Gene regulating senescence improves grain protein, zinc, and iron content in wheat.</title>
        <authorList>
            <person name="Uauy C."/>
            <person name="Distelfeld A."/>
            <person name="Fahima T."/>
            <person name="Blechl A."/>
            <person name="Dubcovsky J."/>
        </authorList>
    </citation>
    <scope>NUCLEOTIDE SEQUENCE [GENOMIC DNA]</scope>
    <scope>FUNCTION</scope>
</reference>
<reference key="2">
    <citation type="journal article" date="2008" name="Mol. Breed.">
        <title>Colinearity between the barley grain protein content (GPC) QTL on chromosome arm 6HS and the wheat Gpc-B1 region.</title>
        <authorList>
            <person name="Distelfeld A."/>
            <person name="Korol A."/>
            <person name="Dubcovsky J."/>
            <person name="Uauy C."/>
            <person name="Blake T."/>
            <person name="Fahima T."/>
        </authorList>
    </citation>
    <scope>NUCLEOTIDE SEQUENCE [GENOMIC DNA]</scope>
</reference>
<reference key="3">
    <citation type="journal article" date="2010" name="J. Plant Physiol.">
        <title>NAM-1gene polymorphism and grain protein content in Hordeum.</title>
        <authorList>
            <person name="Jamar C."/>
            <person name="Loffet F."/>
            <person name="Frettinger P."/>
            <person name="Ramsay L."/>
            <person name="Fauconnier M.L."/>
            <person name="du Jardin P."/>
        </authorList>
    </citation>
    <scope>FUNCTION</scope>
</reference>
<dbReference type="EMBL" id="DQ869678">
    <property type="protein sequence ID" value="ABI94357.1"/>
    <property type="molecule type" value="Genomic_DNA"/>
</dbReference>
<dbReference type="EMBL" id="EU368851">
    <property type="protein sequence ID" value="ABY67949.1"/>
    <property type="molecule type" value="Genomic_DNA"/>
</dbReference>
<dbReference type="SMR" id="A0SPJ8"/>
<dbReference type="FunCoup" id="A0SPJ8">
    <property type="interactions" value="838"/>
</dbReference>
<dbReference type="STRING" id="112509.A0SPJ8"/>
<dbReference type="InParanoid" id="A0SPJ8"/>
<dbReference type="Proteomes" id="UP000011116">
    <property type="component" value="Unassembled WGS sequence"/>
</dbReference>
<dbReference type="GO" id="GO:0005634">
    <property type="term" value="C:nucleus"/>
    <property type="evidence" value="ECO:0007669"/>
    <property type="project" value="UniProtKB-SubCell"/>
</dbReference>
<dbReference type="GO" id="GO:0003677">
    <property type="term" value="F:DNA binding"/>
    <property type="evidence" value="ECO:0007669"/>
    <property type="project" value="UniProtKB-KW"/>
</dbReference>
<dbReference type="GO" id="GO:0006355">
    <property type="term" value="P:regulation of DNA-templated transcription"/>
    <property type="evidence" value="ECO:0007669"/>
    <property type="project" value="InterPro"/>
</dbReference>
<dbReference type="GO" id="GO:0048731">
    <property type="term" value="P:system development"/>
    <property type="evidence" value="ECO:0000318"/>
    <property type="project" value="GO_Central"/>
</dbReference>
<dbReference type="FunFam" id="2.170.150.80:FF:000005">
    <property type="entry name" value="NAC transcription factor 56"/>
    <property type="match status" value="1"/>
</dbReference>
<dbReference type="Gene3D" id="2.170.150.80">
    <property type="entry name" value="NAC domain"/>
    <property type="match status" value="1"/>
</dbReference>
<dbReference type="InterPro" id="IPR003441">
    <property type="entry name" value="NAC-dom"/>
</dbReference>
<dbReference type="InterPro" id="IPR036093">
    <property type="entry name" value="NAC_dom_sf"/>
</dbReference>
<dbReference type="PANTHER" id="PTHR31719">
    <property type="entry name" value="NAC TRANSCRIPTION FACTOR 56"/>
    <property type="match status" value="1"/>
</dbReference>
<dbReference type="PANTHER" id="PTHR31719:SF149">
    <property type="entry name" value="NAC TRANSCRIPTION FACTOR NAM-2"/>
    <property type="match status" value="1"/>
</dbReference>
<dbReference type="Pfam" id="PF02365">
    <property type="entry name" value="NAM"/>
    <property type="match status" value="1"/>
</dbReference>
<dbReference type="SUPFAM" id="SSF101941">
    <property type="entry name" value="NAC domain"/>
    <property type="match status" value="1"/>
</dbReference>
<dbReference type="PROSITE" id="PS51005">
    <property type="entry name" value="NAC"/>
    <property type="match status" value="1"/>
</dbReference>
<feature type="chain" id="PRO_0000420375" description="NAC transcription factor NAM-1">
    <location>
        <begin position="1"/>
        <end position="406"/>
    </location>
</feature>
<feature type="domain" description="NAC" evidence="1">
    <location>
        <begin position="35"/>
        <end position="204"/>
    </location>
</feature>
<feature type="DNA-binding region" evidence="1">
    <location>
        <begin position="137"/>
        <end position="210"/>
    </location>
</feature>
<feature type="region of interest" description="Disordered" evidence="2">
    <location>
        <begin position="1"/>
        <end position="40"/>
    </location>
</feature>
<feature type="compositionally biased region" description="Polar residues" evidence="2">
    <location>
        <begin position="1"/>
        <end position="11"/>
    </location>
</feature>
<name>NAM1_HORVV</name>
<proteinExistence type="predicted"/>
<gene>
    <name type="primary">NAM-1</name>
</gene>
<accession>A0SPJ8</accession>
<accession>B0FZ69</accession>
<comment type="function">
    <text evidence="3 4">Transcription factor of the NAC family associated with the grain protein content (GPC). Accelerates senescence and increases nutrient remobilization from leaves to developing grains. Sequences of 11 European varieties of H.vulgare tested belongs to the same haplotype while the sequence found in H.spontaneum, an ancestor of the cultivated H.vulgare which has a higher GPC, belongs to an other haplotype.</text>
</comment>
<comment type="subcellular location">
    <subcellularLocation>
        <location evidence="5">Nucleus</location>
    </subcellularLocation>
</comment>
<comment type="domain">
    <text>The NAC domain includes a DNA-binding domain and a dimerization domain.</text>
</comment>
<comment type="miscellaneous">
    <text>High grain protein content (GPC) is a desirable trait in breadmaking and pasta wheat varieties because of its positive effects on quality and nutritional value while Low GPC is a desirable trait for barley malt and beer production.</text>
</comment>
<sequence>MGSPDSSSGSAQKPPRHQHQHQPPPPRRQGSAPELPPGFRFHPTDEELVVHYLKKKAAKAPLPVTIIAEVDLYKFDPWELPEKATFGEHEWYFFSPRDRKYANGARPNRAATSGYWKATGTDKPILASATGCGREKVGVKKALVFYRGKPPRGLKTNWIMHEYRLTGASAGSTTTSRPPPVTGGSRAPASLRLDDWVLCRIYKKTSKAAAAVGDEQRSMECEDSVEDAVTAYPPYATAGMAGAGAHGSNYVQLLHHHDSHEDNFQLDGLLTEHDVGLSAGAASLGHLAAAARATKQFLAPSSSTPFNWLEASTGGSILPQARNFPGFNRSRNVGSMSLSSTADDMAGAVDVSDGGNAVNAMYLPVQDGTYHQHVILGAPLAPEAIAGAATSGFQHHVQISGVNWNP</sequence>
<protein>
    <recommendedName>
        <fullName>NAC transcription factor NAM-1</fullName>
        <shortName>HvNAM-1</shortName>
    </recommendedName>
</protein>
<keyword id="KW-0238">DNA-binding</keyword>
<keyword id="KW-0539">Nucleus</keyword>
<keyword id="KW-1185">Reference proteome</keyword>
<keyword id="KW-0804">Transcription</keyword>
<keyword id="KW-0805">Transcription regulation</keyword>
<evidence type="ECO:0000255" key="1">
    <source>
        <dbReference type="PROSITE-ProRule" id="PRU00353"/>
    </source>
</evidence>
<evidence type="ECO:0000256" key="2">
    <source>
        <dbReference type="SAM" id="MobiDB-lite"/>
    </source>
</evidence>
<evidence type="ECO:0000269" key="3">
    <source>
    </source>
</evidence>
<evidence type="ECO:0000269" key="4">
    <source>
    </source>
</evidence>
<evidence type="ECO:0000305" key="5"/>
<organism>
    <name type="scientific">Hordeum vulgare subsp. vulgare</name>
    <name type="common">Domesticated barley</name>
    <dbReference type="NCBI Taxonomy" id="112509"/>
    <lineage>
        <taxon>Eukaryota</taxon>
        <taxon>Viridiplantae</taxon>
        <taxon>Streptophyta</taxon>
        <taxon>Embryophyta</taxon>
        <taxon>Tracheophyta</taxon>
        <taxon>Spermatophyta</taxon>
        <taxon>Magnoliopsida</taxon>
        <taxon>Liliopsida</taxon>
        <taxon>Poales</taxon>
        <taxon>Poaceae</taxon>
        <taxon>BOP clade</taxon>
        <taxon>Pooideae</taxon>
        <taxon>Triticodae</taxon>
        <taxon>Triticeae</taxon>
        <taxon>Hordeinae</taxon>
        <taxon>Hordeum</taxon>
    </lineage>
</organism>